<comment type="catalytic activity">
    <reaction>
        <text>Catalyzes the rearrangement of -S-S- bonds in proteins.</text>
        <dbReference type="EC" id="5.3.4.1"/>
    </reaction>
</comment>
<comment type="subcellular location">
    <subcellularLocation>
        <location evidence="1">Endoplasmic reticulum lumen</location>
    </subcellularLocation>
</comment>
<comment type="similarity">
    <text evidence="4">Belongs to the protein disulfide isomerase family.</text>
</comment>
<comment type="caution">
    <text evidence="4">Was originally thought to be a phosphatidylinositol 4,5-bisphosphate phosphodiesterase type I (phospholipase C-alpha).</text>
</comment>
<evidence type="ECO:0000250" key="1"/>
<evidence type="ECO:0000255" key="2"/>
<evidence type="ECO:0000255" key="3">
    <source>
        <dbReference type="PROSITE-ProRule" id="PRU00691"/>
    </source>
</evidence>
<evidence type="ECO:0000305" key="4"/>
<name>ERP60_SCHMA</name>
<sequence length="484" mass="54306">MRWLLSCLFLVAFASCSKVLELTKDNFHSELKSIPVALVKFYAPWCGHCKKLAPEFTSAAQIISGKTNDVKLVKVDCTTQESICSEFGVSGYPTLKIFRNGDLDGEYNGPRNANGIANYMISRAGPVSKEVSTVSDVENVLSDDKPTVFAFVKSSSDPLIKTFMALAKSMVDDAVFCHSHNNLFVTPSDNELRVYLPKRLRTKFEDDFAVYKGELESNNIKDWIRKHGQGLVGYRSPSNTFYFENSDLVVLYNNQSIDSYPSGVKYLRNRVLKTLKDNPQKFKNLVFAYSFADDFSYEISDYGIEADKLPAVVIQSKDKKYKLEKFSLDAFSDFLNKFEDGLLTPHVKSEPLPTDDSSAVKKLVALNFDEIVNNEEKDVMVVFHAGWCGHCKNLMPKYEEAASKVKNEPNLVLAAMDATANDVPSPYQVRGFPTIYFVPKGKKSSPVSYEGGRDTNDIIKYLAREATEELIGYDRSGNPKKSEL</sequence>
<proteinExistence type="inferred from homology"/>
<protein>
    <recommendedName>
        <fullName>Probable protein disulfide-isomerase ER-60</fullName>
        <ecNumber>5.3.4.1</ecNumber>
    </recommendedName>
    <alternativeName>
        <fullName>ERP60</fullName>
    </alternativeName>
</protein>
<keyword id="KW-1015">Disulfide bond</keyword>
<keyword id="KW-0256">Endoplasmic reticulum</keyword>
<keyword id="KW-0413">Isomerase</keyword>
<keyword id="KW-0676">Redox-active center</keyword>
<keyword id="KW-1185">Reference proteome</keyword>
<keyword id="KW-0677">Repeat</keyword>
<keyword id="KW-0732">Signal</keyword>
<dbReference type="EC" id="5.3.4.1"/>
<dbReference type="EMBL" id="Z22934">
    <property type="protein sequence ID" value="CAA80521.1"/>
    <property type="molecule type" value="Genomic_DNA"/>
</dbReference>
<dbReference type="SMR" id="P38658"/>
<dbReference type="FunCoup" id="P38658">
    <property type="interactions" value="1580"/>
</dbReference>
<dbReference type="STRING" id="6183.P38658"/>
<dbReference type="eggNOG" id="KOG0190">
    <property type="taxonomic scope" value="Eukaryota"/>
</dbReference>
<dbReference type="HOGENOM" id="CLU_025879_6_0_1"/>
<dbReference type="InParanoid" id="P38658"/>
<dbReference type="Proteomes" id="UP000008854">
    <property type="component" value="Unassembled WGS sequence"/>
</dbReference>
<dbReference type="GO" id="GO:0005788">
    <property type="term" value="C:endoplasmic reticulum lumen"/>
    <property type="evidence" value="ECO:0007669"/>
    <property type="project" value="UniProtKB-SubCell"/>
</dbReference>
<dbReference type="GO" id="GO:0003756">
    <property type="term" value="F:protein disulfide isomerase activity"/>
    <property type="evidence" value="ECO:0007669"/>
    <property type="project" value="UniProtKB-EC"/>
</dbReference>
<dbReference type="GO" id="GO:0006457">
    <property type="term" value="P:protein folding"/>
    <property type="evidence" value="ECO:0007669"/>
    <property type="project" value="TreeGrafter"/>
</dbReference>
<dbReference type="GO" id="GO:0034976">
    <property type="term" value="P:response to endoplasmic reticulum stress"/>
    <property type="evidence" value="ECO:0007669"/>
    <property type="project" value="TreeGrafter"/>
</dbReference>
<dbReference type="CDD" id="cd02961">
    <property type="entry name" value="PDI_a_family"/>
    <property type="match status" value="1"/>
</dbReference>
<dbReference type="CDD" id="cd02995">
    <property type="entry name" value="PDI_a_PDI_a'_C"/>
    <property type="match status" value="1"/>
</dbReference>
<dbReference type="CDD" id="cd03073">
    <property type="entry name" value="PDI_b'_ERp72_ERp57"/>
    <property type="match status" value="1"/>
</dbReference>
<dbReference type="CDD" id="cd02981">
    <property type="entry name" value="PDI_b_family"/>
    <property type="match status" value="1"/>
</dbReference>
<dbReference type="FunFam" id="3.40.30.10:FF:000045">
    <property type="entry name" value="Disulfide-isomerase A3"/>
    <property type="match status" value="1"/>
</dbReference>
<dbReference type="FunFam" id="3.40.30.10:FF:000017">
    <property type="entry name" value="Protein disulfide-isomerase A4"/>
    <property type="match status" value="1"/>
</dbReference>
<dbReference type="Gene3D" id="3.40.30.10">
    <property type="entry name" value="Glutaredoxin"/>
    <property type="match status" value="4"/>
</dbReference>
<dbReference type="InterPro" id="IPR005788">
    <property type="entry name" value="PDI_thioredoxin-like_dom"/>
</dbReference>
<dbReference type="InterPro" id="IPR005792">
    <property type="entry name" value="Prot_disulphide_isomerase"/>
</dbReference>
<dbReference type="InterPro" id="IPR036249">
    <property type="entry name" value="Thioredoxin-like_sf"/>
</dbReference>
<dbReference type="InterPro" id="IPR017937">
    <property type="entry name" value="Thioredoxin_CS"/>
</dbReference>
<dbReference type="InterPro" id="IPR013766">
    <property type="entry name" value="Thioredoxin_domain"/>
</dbReference>
<dbReference type="NCBIfam" id="TIGR01130">
    <property type="entry name" value="ER_PDI_fam"/>
    <property type="match status" value="1"/>
</dbReference>
<dbReference type="NCBIfam" id="TIGR01126">
    <property type="entry name" value="pdi_dom"/>
    <property type="match status" value="2"/>
</dbReference>
<dbReference type="PANTHER" id="PTHR18929">
    <property type="entry name" value="PROTEIN DISULFIDE ISOMERASE"/>
    <property type="match status" value="1"/>
</dbReference>
<dbReference type="PANTHER" id="PTHR18929:SF132">
    <property type="entry name" value="PROTEIN DISULFIDE-ISOMERASE A3"/>
    <property type="match status" value="1"/>
</dbReference>
<dbReference type="Pfam" id="PF00085">
    <property type="entry name" value="Thioredoxin"/>
    <property type="match status" value="2"/>
</dbReference>
<dbReference type="Pfam" id="PF13848">
    <property type="entry name" value="Thioredoxin_6"/>
    <property type="match status" value="1"/>
</dbReference>
<dbReference type="PRINTS" id="PR00421">
    <property type="entry name" value="THIOREDOXIN"/>
</dbReference>
<dbReference type="SUPFAM" id="SSF52833">
    <property type="entry name" value="Thioredoxin-like"/>
    <property type="match status" value="4"/>
</dbReference>
<dbReference type="PROSITE" id="PS00194">
    <property type="entry name" value="THIOREDOXIN_1"/>
    <property type="match status" value="2"/>
</dbReference>
<dbReference type="PROSITE" id="PS51352">
    <property type="entry name" value="THIOREDOXIN_2"/>
    <property type="match status" value="2"/>
</dbReference>
<organism>
    <name type="scientific">Schistosoma mansoni</name>
    <name type="common">Blood fluke</name>
    <dbReference type="NCBI Taxonomy" id="6183"/>
    <lineage>
        <taxon>Eukaryota</taxon>
        <taxon>Metazoa</taxon>
        <taxon>Spiralia</taxon>
        <taxon>Lophotrochozoa</taxon>
        <taxon>Platyhelminthes</taxon>
        <taxon>Trematoda</taxon>
        <taxon>Digenea</taxon>
        <taxon>Strigeidida</taxon>
        <taxon>Schistosomatoidea</taxon>
        <taxon>Schistosomatidae</taxon>
        <taxon>Schistosoma</taxon>
    </lineage>
</organism>
<accession>P38658</accession>
<feature type="signal peptide" evidence="2">
    <location>
        <begin position="1"/>
        <end position="14"/>
    </location>
</feature>
<feature type="chain" id="PRO_0000034228" description="Probable protein disulfide-isomerase ER-60">
    <location>
        <begin position="15"/>
        <end position="484"/>
    </location>
</feature>
<feature type="domain" description="Thioredoxin 1" evidence="3">
    <location>
        <begin position="15"/>
        <end position="125"/>
    </location>
</feature>
<feature type="domain" description="Thioredoxin 2" evidence="3">
    <location>
        <begin position="338"/>
        <end position="467"/>
    </location>
</feature>
<feature type="short sequence motif" description="Prevents secretion from ER" evidence="1">
    <location>
        <begin position="481"/>
        <end position="484"/>
    </location>
</feature>
<feature type="active site" description="Nucleophile" evidence="1">
    <location>
        <position position="46"/>
    </location>
</feature>
<feature type="active site" description="Nucleophile" evidence="1">
    <location>
        <position position="49"/>
    </location>
</feature>
<feature type="active site" description="Nucleophile" evidence="1">
    <location>
        <position position="388"/>
    </location>
</feature>
<feature type="active site" description="Nucleophile" evidence="1">
    <location>
        <position position="391"/>
    </location>
</feature>
<feature type="site" description="Contributes to redox potential value" evidence="1">
    <location>
        <position position="47"/>
    </location>
</feature>
<feature type="site" description="Contributes to redox potential value" evidence="1">
    <location>
        <position position="48"/>
    </location>
</feature>
<feature type="site" description="Lowers pKa of C-terminal Cys of first active site" evidence="1">
    <location>
        <position position="111"/>
    </location>
</feature>
<feature type="site" description="Contributes to redox potential value" evidence="1">
    <location>
        <position position="389"/>
    </location>
</feature>
<feature type="site" description="Contributes to redox potential value" evidence="1">
    <location>
        <position position="390"/>
    </location>
</feature>
<feature type="site" description="Lowers pKa of C-terminal Cys of second active site" evidence="1">
    <location>
        <position position="453"/>
    </location>
</feature>
<feature type="disulfide bond" description="Redox-active" evidence="3">
    <location>
        <begin position="46"/>
        <end position="49"/>
    </location>
</feature>
<feature type="disulfide bond" description="Redox-active" evidence="3">
    <location>
        <begin position="388"/>
        <end position="391"/>
    </location>
</feature>
<reference key="1">
    <citation type="journal article" date="1994" name="Mol. Biochem. Parasitol.">
        <title>Characterization of the complete protein disulfide isomerase gene of Schistosoma mansoni and identification of the tissues of its expression.</title>
        <authorList>
            <person name="Finken M."/>
            <person name="Sobek A."/>
            <person name="Symmons P."/>
            <person name="Kunz W."/>
        </authorList>
    </citation>
    <scope>NUCLEOTIDE SEQUENCE [GENOMIC DNA]</scope>
    <source>
        <strain>Liberian</strain>
    </source>
</reference>